<accession>P19118</accession>
<protein>
    <recommendedName>
        <fullName>Triosephosphate isomerase, cytosolic</fullName>
        <shortName>TIM</shortName>
        <shortName>Triose-phosphate isomerase</shortName>
        <ecNumber>5.3.1.1</ecNumber>
    </recommendedName>
</protein>
<feature type="chain" id="PRO_0000090150" description="Triosephosphate isomerase, cytosolic">
    <location>
        <begin position="1"/>
        <end position="10" status="greater than"/>
    </location>
</feature>
<feature type="non-terminal residue">
    <location>
        <position position="10"/>
    </location>
</feature>
<reference key="1">
    <citation type="journal article" date="1987" name="Proc. Natl. Acad. Sci. U.S.A.">
        <title>Alterations in the phenotype of plant cells studied by NH2-terminal amino acid-sequence analysis of proteins electroblotted from two-dimensional gel-separated total extracts.</title>
        <authorList>
            <person name="Bauw G."/>
            <person name="de Loose M."/>
            <person name="Inze D."/>
            <person name="van Montagu M."/>
            <person name="Vandekerckhove J."/>
        </authorList>
    </citation>
    <scope>PROTEIN SEQUENCE</scope>
</reference>
<keyword id="KW-0963">Cytoplasm</keyword>
<keyword id="KW-0903">Direct protein sequencing</keyword>
<keyword id="KW-0312">Gluconeogenesis</keyword>
<keyword id="KW-0324">Glycolysis</keyword>
<keyword id="KW-0413">Isomerase</keyword>
<organism>
    <name type="scientific">Nicotiana plumbaginifolia</name>
    <name type="common">Leadwort-leaved tobacco</name>
    <name type="synonym">Tex-Mex tobacco</name>
    <dbReference type="NCBI Taxonomy" id="4092"/>
    <lineage>
        <taxon>Eukaryota</taxon>
        <taxon>Viridiplantae</taxon>
        <taxon>Streptophyta</taxon>
        <taxon>Embryophyta</taxon>
        <taxon>Tracheophyta</taxon>
        <taxon>Spermatophyta</taxon>
        <taxon>Magnoliopsida</taxon>
        <taxon>eudicotyledons</taxon>
        <taxon>Gunneridae</taxon>
        <taxon>Pentapetalae</taxon>
        <taxon>asterids</taxon>
        <taxon>lamiids</taxon>
        <taxon>Solanales</taxon>
        <taxon>Solanaceae</taxon>
        <taxon>Nicotianoideae</taxon>
        <taxon>Nicotianeae</taxon>
        <taxon>Nicotiana</taxon>
    </lineage>
</organism>
<comment type="catalytic activity">
    <reaction evidence="1">
        <text>D-glyceraldehyde 3-phosphate = dihydroxyacetone phosphate</text>
        <dbReference type="Rhea" id="RHEA:18585"/>
        <dbReference type="ChEBI" id="CHEBI:57642"/>
        <dbReference type="ChEBI" id="CHEBI:59776"/>
        <dbReference type="EC" id="5.3.1.1"/>
    </reaction>
</comment>
<comment type="pathway">
    <text evidence="1">Carbohydrate biosynthesis; gluconeogenesis.</text>
</comment>
<comment type="pathway">
    <text evidence="1">Carbohydrate degradation; glycolysis; D-glyceraldehyde 3-phosphate from glycerone phosphate: step 1/1.</text>
</comment>
<comment type="subunit">
    <text>Homodimer.</text>
</comment>
<comment type="subcellular location">
    <subcellularLocation>
        <location evidence="2">Cytoplasm</location>
    </subcellularLocation>
</comment>
<comment type="miscellaneous">
    <text>In plants, there are two types of TPIS, cytosolic and plastid.</text>
</comment>
<comment type="similarity">
    <text evidence="1">Belongs to the triosephosphate isomerase family.</text>
</comment>
<proteinExistence type="evidence at protein level"/>
<dbReference type="EC" id="5.3.1.1"/>
<dbReference type="PIR" id="A27617">
    <property type="entry name" value="A27617"/>
</dbReference>
<dbReference type="UniPathway" id="UPA00109">
    <property type="reaction ID" value="UER00189"/>
</dbReference>
<dbReference type="UniPathway" id="UPA00138"/>
<dbReference type="GO" id="GO:0005737">
    <property type="term" value="C:cytoplasm"/>
    <property type="evidence" value="ECO:0007669"/>
    <property type="project" value="UniProtKB-SubCell"/>
</dbReference>
<dbReference type="GO" id="GO:0004807">
    <property type="term" value="F:triose-phosphate isomerase activity"/>
    <property type="evidence" value="ECO:0007669"/>
    <property type="project" value="UniProtKB-EC"/>
</dbReference>
<dbReference type="GO" id="GO:0006094">
    <property type="term" value="P:gluconeogenesis"/>
    <property type="evidence" value="ECO:0007669"/>
    <property type="project" value="UniProtKB-UniPathway"/>
</dbReference>
<dbReference type="GO" id="GO:0006096">
    <property type="term" value="P:glycolytic process"/>
    <property type="evidence" value="ECO:0007669"/>
    <property type="project" value="UniProtKB-UniPathway"/>
</dbReference>
<evidence type="ECO:0000255" key="1">
    <source>
        <dbReference type="PROSITE-ProRule" id="PRU10127"/>
    </source>
</evidence>
<evidence type="ECO:0000305" key="2"/>
<name>TPIS_NICPL</name>
<sequence length="10" mass="1140">GRTFFVGGNW</sequence>